<organism>
    <name type="scientific">Desulfitobacterium hafniense (strain DSM 10664 / DCB-2)</name>
    <dbReference type="NCBI Taxonomy" id="272564"/>
    <lineage>
        <taxon>Bacteria</taxon>
        <taxon>Bacillati</taxon>
        <taxon>Bacillota</taxon>
        <taxon>Clostridia</taxon>
        <taxon>Eubacteriales</taxon>
        <taxon>Desulfitobacteriaceae</taxon>
        <taxon>Desulfitobacterium</taxon>
    </lineage>
</organism>
<feature type="chain" id="PRO_1000199305" description="Phenylalanine--tRNA ligase alpha subunit">
    <location>
        <begin position="1"/>
        <end position="340"/>
    </location>
</feature>
<feature type="binding site" evidence="1">
    <location>
        <position position="255"/>
    </location>
    <ligand>
        <name>Mg(2+)</name>
        <dbReference type="ChEBI" id="CHEBI:18420"/>
        <note>shared with beta subunit</note>
    </ligand>
</feature>
<comment type="catalytic activity">
    <reaction evidence="1">
        <text>tRNA(Phe) + L-phenylalanine + ATP = L-phenylalanyl-tRNA(Phe) + AMP + diphosphate + H(+)</text>
        <dbReference type="Rhea" id="RHEA:19413"/>
        <dbReference type="Rhea" id="RHEA-COMP:9668"/>
        <dbReference type="Rhea" id="RHEA-COMP:9699"/>
        <dbReference type="ChEBI" id="CHEBI:15378"/>
        <dbReference type="ChEBI" id="CHEBI:30616"/>
        <dbReference type="ChEBI" id="CHEBI:33019"/>
        <dbReference type="ChEBI" id="CHEBI:58095"/>
        <dbReference type="ChEBI" id="CHEBI:78442"/>
        <dbReference type="ChEBI" id="CHEBI:78531"/>
        <dbReference type="ChEBI" id="CHEBI:456215"/>
        <dbReference type="EC" id="6.1.1.20"/>
    </reaction>
</comment>
<comment type="cofactor">
    <cofactor evidence="1">
        <name>Mg(2+)</name>
        <dbReference type="ChEBI" id="CHEBI:18420"/>
    </cofactor>
    <text evidence="1">Binds 2 magnesium ions per tetramer.</text>
</comment>
<comment type="subunit">
    <text evidence="1">Tetramer of two alpha and two beta subunits.</text>
</comment>
<comment type="subcellular location">
    <subcellularLocation>
        <location evidence="1">Cytoplasm</location>
    </subcellularLocation>
</comment>
<comment type="similarity">
    <text evidence="1">Belongs to the class-II aminoacyl-tRNA synthetase family. Phe-tRNA synthetase alpha subunit type 1 subfamily.</text>
</comment>
<dbReference type="EC" id="6.1.1.20" evidence="1"/>
<dbReference type="EMBL" id="CP001336">
    <property type="protein sequence ID" value="ACL18287.1"/>
    <property type="molecule type" value="Genomic_DNA"/>
</dbReference>
<dbReference type="RefSeq" id="WP_015942635.1">
    <property type="nucleotide sequence ID" value="NC_011830.1"/>
</dbReference>
<dbReference type="SMR" id="B8G0L8"/>
<dbReference type="KEGG" id="dhd:Dhaf_0219"/>
<dbReference type="HOGENOM" id="CLU_025086_0_1_9"/>
<dbReference type="Proteomes" id="UP000007726">
    <property type="component" value="Chromosome"/>
</dbReference>
<dbReference type="GO" id="GO:0005737">
    <property type="term" value="C:cytoplasm"/>
    <property type="evidence" value="ECO:0007669"/>
    <property type="project" value="UniProtKB-SubCell"/>
</dbReference>
<dbReference type="GO" id="GO:0005524">
    <property type="term" value="F:ATP binding"/>
    <property type="evidence" value="ECO:0007669"/>
    <property type="project" value="UniProtKB-UniRule"/>
</dbReference>
<dbReference type="GO" id="GO:0140096">
    <property type="term" value="F:catalytic activity, acting on a protein"/>
    <property type="evidence" value="ECO:0007669"/>
    <property type="project" value="UniProtKB-ARBA"/>
</dbReference>
<dbReference type="GO" id="GO:0000287">
    <property type="term" value="F:magnesium ion binding"/>
    <property type="evidence" value="ECO:0007669"/>
    <property type="project" value="UniProtKB-UniRule"/>
</dbReference>
<dbReference type="GO" id="GO:0004826">
    <property type="term" value="F:phenylalanine-tRNA ligase activity"/>
    <property type="evidence" value="ECO:0007669"/>
    <property type="project" value="UniProtKB-UniRule"/>
</dbReference>
<dbReference type="GO" id="GO:0016740">
    <property type="term" value="F:transferase activity"/>
    <property type="evidence" value="ECO:0007669"/>
    <property type="project" value="UniProtKB-ARBA"/>
</dbReference>
<dbReference type="GO" id="GO:0000049">
    <property type="term" value="F:tRNA binding"/>
    <property type="evidence" value="ECO:0007669"/>
    <property type="project" value="InterPro"/>
</dbReference>
<dbReference type="GO" id="GO:0006432">
    <property type="term" value="P:phenylalanyl-tRNA aminoacylation"/>
    <property type="evidence" value="ECO:0007669"/>
    <property type="project" value="UniProtKB-UniRule"/>
</dbReference>
<dbReference type="CDD" id="cd00496">
    <property type="entry name" value="PheRS_alpha_core"/>
    <property type="match status" value="1"/>
</dbReference>
<dbReference type="FunFam" id="3.30.930.10:FF:000003">
    <property type="entry name" value="Phenylalanine--tRNA ligase alpha subunit"/>
    <property type="match status" value="1"/>
</dbReference>
<dbReference type="Gene3D" id="3.30.930.10">
    <property type="entry name" value="Bira Bifunctional Protein, Domain 2"/>
    <property type="match status" value="1"/>
</dbReference>
<dbReference type="HAMAP" id="MF_00281">
    <property type="entry name" value="Phe_tRNA_synth_alpha1"/>
    <property type="match status" value="1"/>
</dbReference>
<dbReference type="InterPro" id="IPR006195">
    <property type="entry name" value="aa-tRNA-synth_II"/>
</dbReference>
<dbReference type="InterPro" id="IPR045864">
    <property type="entry name" value="aa-tRNA-synth_II/BPL/LPL"/>
</dbReference>
<dbReference type="InterPro" id="IPR004529">
    <property type="entry name" value="Phe-tRNA-synth_IIc_asu"/>
</dbReference>
<dbReference type="InterPro" id="IPR004188">
    <property type="entry name" value="Phe-tRNA_ligase_II_N"/>
</dbReference>
<dbReference type="InterPro" id="IPR022911">
    <property type="entry name" value="Phe_tRNA_ligase_alpha1_bac"/>
</dbReference>
<dbReference type="InterPro" id="IPR002319">
    <property type="entry name" value="Phenylalanyl-tRNA_Synthase"/>
</dbReference>
<dbReference type="InterPro" id="IPR010978">
    <property type="entry name" value="tRNA-bd_arm"/>
</dbReference>
<dbReference type="NCBIfam" id="TIGR00468">
    <property type="entry name" value="pheS"/>
    <property type="match status" value="1"/>
</dbReference>
<dbReference type="PANTHER" id="PTHR11538:SF41">
    <property type="entry name" value="PHENYLALANINE--TRNA LIGASE, MITOCHONDRIAL"/>
    <property type="match status" value="1"/>
</dbReference>
<dbReference type="PANTHER" id="PTHR11538">
    <property type="entry name" value="PHENYLALANYL-TRNA SYNTHETASE"/>
    <property type="match status" value="1"/>
</dbReference>
<dbReference type="Pfam" id="PF02912">
    <property type="entry name" value="Phe_tRNA-synt_N"/>
    <property type="match status" value="1"/>
</dbReference>
<dbReference type="Pfam" id="PF01409">
    <property type="entry name" value="tRNA-synt_2d"/>
    <property type="match status" value="1"/>
</dbReference>
<dbReference type="SUPFAM" id="SSF55681">
    <property type="entry name" value="Class II aaRS and biotin synthetases"/>
    <property type="match status" value="1"/>
</dbReference>
<dbReference type="SUPFAM" id="SSF46589">
    <property type="entry name" value="tRNA-binding arm"/>
    <property type="match status" value="1"/>
</dbReference>
<dbReference type="PROSITE" id="PS50862">
    <property type="entry name" value="AA_TRNA_LIGASE_II"/>
    <property type="match status" value="1"/>
</dbReference>
<accession>B8G0L8</accession>
<protein>
    <recommendedName>
        <fullName evidence="1">Phenylalanine--tRNA ligase alpha subunit</fullName>
        <ecNumber evidence="1">6.1.1.20</ecNumber>
    </recommendedName>
    <alternativeName>
        <fullName evidence="1">Phenylalanyl-tRNA synthetase alpha subunit</fullName>
        <shortName evidence="1">PheRS</shortName>
    </alternativeName>
</protein>
<evidence type="ECO:0000255" key="1">
    <source>
        <dbReference type="HAMAP-Rule" id="MF_00281"/>
    </source>
</evidence>
<keyword id="KW-0030">Aminoacyl-tRNA synthetase</keyword>
<keyword id="KW-0067">ATP-binding</keyword>
<keyword id="KW-0963">Cytoplasm</keyword>
<keyword id="KW-0436">Ligase</keyword>
<keyword id="KW-0460">Magnesium</keyword>
<keyword id="KW-0479">Metal-binding</keyword>
<keyword id="KW-0547">Nucleotide-binding</keyword>
<keyword id="KW-0648">Protein biosynthesis</keyword>
<reference key="1">
    <citation type="journal article" date="2012" name="BMC Microbiol.">
        <title>Genome sequence of Desulfitobacterium hafniense DCB-2, a Gram-positive anaerobe capable of dehalogenation and metal reduction.</title>
        <authorList>
            <person name="Kim S.H."/>
            <person name="Harzman C."/>
            <person name="Davis J.K."/>
            <person name="Hutcheson R."/>
            <person name="Broderick J.B."/>
            <person name="Marsh T.L."/>
            <person name="Tiedje J.M."/>
        </authorList>
    </citation>
    <scope>NUCLEOTIDE SEQUENCE [LARGE SCALE GENOMIC DNA]</scope>
    <source>
        <strain>DSM 10664 / DCB-2</strain>
    </source>
</reference>
<sequence>MKQEVHRIQEETLAELQQVSTLEALQELKVKVLGKKGSLTAQLRKMGGLSPEERPIFGQVVNETRDILEAAWVRREEELSQAAMLKQLEEEKLDISLPGVSLPRGHQHPLTKVIEEIEEIFLGMGFQIAEGPEIESDYYNFEALNLPKDHPAREMQDSFYITEEILLRTQTSPVQIRTMEKQRPQLPVKIICPGKVYRNDDDATHSPMFHQVEGLMVDRGIRMSDLKGILLSFSRMMFGESREIRLRPSFFPFTEPSAEVDVSCMLCGGAGCRICKGTGWIEILGSGMVHPRVLEMGGYDSKELTGFAFGMGVERIAMLKYGIEDMRLLFDNDLRFLQQF</sequence>
<gene>
    <name evidence="1" type="primary">pheS</name>
    <name type="ordered locus">Dhaf_0219</name>
</gene>
<proteinExistence type="inferred from homology"/>
<name>SYFA_DESHD</name>